<proteinExistence type="evidence at transcript level"/>
<reference key="1">
    <citation type="journal article" date="2000" name="Biochim. Biophys. Acta">
        <title>Evolution of the prohormone convertases: identification of a homologue of PC6 in the protochordate amphioxus.</title>
        <authorList>
            <person name="Oliva A.A. Jr."/>
            <person name="Chan S.J."/>
            <person name="Steiner D.F."/>
        </authorList>
    </citation>
    <scope>NUCLEOTIDE SEQUENCE [MRNA] (ISOFORMS A; B AND C)</scope>
</reference>
<organism>
    <name type="scientific">Branchiostoma californiense</name>
    <name type="common">California lancelet</name>
    <name type="synonym">Amphioxus</name>
    <dbReference type="NCBI Taxonomy" id="7738"/>
    <lineage>
        <taxon>Eukaryota</taxon>
        <taxon>Metazoa</taxon>
        <taxon>Chordata</taxon>
        <taxon>Cephalochordata</taxon>
        <taxon>Leptocardii</taxon>
        <taxon>Amphioxiformes</taxon>
        <taxon>Branchiostomatidae</taxon>
        <taxon>Branchiostoma</taxon>
    </lineage>
</organism>
<accession>Q9NJ15</accession>
<accession>Q9NJ14</accession>
<accession>Q9NJ16</accession>
<name>PCSK5_BRACL</name>
<protein>
    <recommendedName>
        <fullName>Proprotein convertase subtilisin/kexin type 5</fullName>
        <ecNumber>3.4.21.-</ecNumber>
    </recommendedName>
    <alternativeName>
        <fullName>Proprotein convertase PC6-like</fullName>
        <shortName>aPC6</shortName>
    </alternativeName>
</protein>
<dbReference type="EC" id="3.4.21.-"/>
<dbReference type="EMBL" id="AF184615">
    <property type="protein sequence ID" value="AAF26300.1"/>
    <property type="molecule type" value="mRNA"/>
</dbReference>
<dbReference type="EMBL" id="AF184616">
    <property type="protein sequence ID" value="AAF26301.1"/>
    <property type="molecule type" value="mRNA"/>
</dbReference>
<dbReference type="EMBL" id="AF184617">
    <property type="protein sequence ID" value="AAF26302.1"/>
    <property type="molecule type" value="mRNA"/>
</dbReference>
<dbReference type="SMR" id="Q9NJ15"/>
<dbReference type="GlyCosmos" id="Q9NJ15">
    <property type="glycosylation" value="3 sites, No reported glycans"/>
</dbReference>
<dbReference type="GO" id="GO:0005576">
    <property type="term" value="C:extracellular region"/>
    <property type="evidence" value="ECO:0007669"/>
    <property type="project" value="UniProtKB-SubCell"/>
</dbReference>
<dbReference type="GO" id="GO:0000139">
    <property type="term" value="C:Golgi membrane"/>
    <property type="evidence" value="ECO:0007669"/>
    <property type="project" value="TreeGrafter"/>
</dbReference>
<dbReference type="GO" id="GO:0005886">
    <property type="term" value="C:plasma membrane"/>
    <property type="evidence" value="ECO:0007669"/>
    <property type="project" value="UniProtKB-SubCell"/>
</dbReference>
<dbReference type="GO" id="GO:0005802">
    <property type="term" value="C:trans-Golgi network"/>
    <property type="evidence" value="ECO:0007669"/>
    <property type="project" value="TreeGrafter"/>
</dbReference>
<dbReference type="GO" id="GO:0004252">
    <property type="term" value="F:serine-type endopeptidase activity"/>
    <property type="evidence" value="ECO:0007669"/>
    <property type="project" value="InterPro"/>
</dbReference>
<dbReference type="GO" id="GO:0016486">
    <property type="term" value="P:peptide hormone processing"/>
    <property type="evidence" value="ECO:0007669"/>
    <property type="project" value="TreeGrafter"/>
</dbReference>
<dbReference type="CDD" id="cd00064">
    <property type="entry name" value="FU"/>
    <property type="match status" value="12"/>
</dbReference>
<dbReference type="CDD" id="cd04059">
    <property type="entry name" value="Peptidases_S8_Protein_convertases_Kexins_Furin-like"/>
    <property type="match status" value="1"/>
</dbReference>
<dbReference type="FunFam" id="3.40.50.200:FF:000001">
    <property type="entry name" value="Furin 2, isoform B"/>
    <property type="match status" value="1"/>
</dbReference>
<dbReference type="FunFam" id="2.10.220.10:FF:000111">
    <property type="entry name" value="Furin2, putative"/>
    <property type="match status" value="1"/>
</dbReference>
<dbReference type="FunFam" id="2.60.120.260:FF:000072">
    <property type="entry name" value="Proprotein convertase subtilisin/kexin type"/>
    <property type="match status" value="1"/>
</dbReference>
<dbReference type="FunFam" id="3.30.70.850:FF:000001">
    <property type="entry name" value="Proprotein convertase subtilisin/kexin type 5"/>
    <property type="match status" value="1"/>
</dbReference>
<dbReference type="Gene3D" id="2.60.120.260">
    <property type="entry name" value="Galactose-binding domain-like"/>
    <property type="match status" value="1"/>
</dbReference>
<dbReference type="Gene3D" id="2.10.220.10">
    <property type="entry name" value="Hormone Receptor, Insulin-like Growth Factor Receptor 1, Chain A, domain 2"/>
    <property type="match status" value="12"/>
</dbReference>
<dbReference type="Gene3D" id="3.30.70.850">
    <property type="entry name" value="Peptidase S8, pro-domain"/>
    <property type="match status" value="1"/>
</dbReference>
<dbReference type="Gene3D" id="3.40.50.200">
    <property type="entry name" value="Peptidase S8/S53 domain"/>
    <property type="match status" value="1"/>
</dbReference>
<dbReference type="InterPro" id="IPR000742">
    <property type="entry name" value="EGF-like_dom"/>
</dbReference>
<dbReference type="InterPro" id="IPR006212">
    <property type="entry name" value="Furin_repeat"/>
</dbReference>
<dbReference type="InterPro" id="IPR008979">
    <property type="entry name" value="Galactose-bd-like_sf"/>
</dbReference>
<dbReference type="InterPro" id="IPR009030">
    <property type="entry name" value="Growth_fac_rcpt_cys_sf"/>
</dbReference>
<dbReference type="InterPro" id="IPR034182">
    <property type="entry name" value="Kexin/furin"/>
</dbReference>
<dbReference type="InterPro" id="IPR002884">
    <property type="entry name" value="P_dom"/>
</dbReference>
<dbReference type="InterPro" id="IPR000209">
    <property type="entry name" value="Peptidase_S8/S53_dom"/>
</dbReference>
<dbReference type="InterPro" id="IPR036852">
    <property type="entry name" value="Peptidase_S8/S53_dom_sf"/>
</dbReference>
<dbReference type="InterPro" id="IPR022398">
    <property type="entry name" value="Peptidase_S8_His-AS"/>
</dbReference>
<dbReference type="InterPro" id="IPR023828">
    <property type="entry name" value="Peptidase_S8_Ser-AS"/>
</dbReference>
<dbReference type="InterPro" id="IPR015500">
    <property type="entry name" value="Peptidase_S8_subtilisin-rel"/>
</dbReference>
<dbReference type="InterPro" id="IPR032815">
    <property type="entry name" value="S8_pro-domain"/>
</dbReference>
<dbReference type="InterPro" id="IPR038466">
    <property type="entry name" value="S8_pro-domain_sf"/>
</dbReference>
<dbReference type="PANTHER" id="PTHR42884">
    <property type="entry name" value="PROPROTEIN CONVERTASE SUBTILISIN/KEXIN-RELATED"/>
    <property type="match status" value="1"/>
</dbReference>
<dbReference type="PANTHER" id="PTHR42884:SF31">
    <property type="entry name" value="PROPROTEIN CONVERTASE SUBTILISIN_KEXIN TYPE 5"/>
    <property type="match status" value="1"/>
</dbReference>
<dbReference type="Pfam" id="PF01483">
    <property type="entry name" value="P_proprotein"/>
    <property type="match status" value="1"/>
</dbReference>
<dbReference type="Pfam" id="PF00082">
    <property type="entry name" value="Peptidase_S8"/>
    <property type="match status" value="1"/>
</dbReference>
<dbReference type="Pfam" id="PF16470">
    <property type="entry name" value="S8_pro-domain"/>
    <property type="match status" value="1"/>
</dbReference>
<dbReference type="PRINTS" id="PR00723">
    <property type="entry name" value="SUBTILISIN"/>
</dbReference>
<dbReference type="SMART" id="SM00181">
    <property type="entry name" value="EGF"/>
    <property type="match status" value="9"/>
</dbReference>
<dbReference type="SMART" id="SM00261">
    <property type="entry name" value="FU"/>
    <property type="match status" value="18"/>
</dbReference>
<dbReference type="SUPFAM" id="SSF49785">
    <property type="entry name" value="Galactose-binding domain-like"/>
    <property type="match status" value="1"/>
</dbReference>
<dbReference type="SUPFAM" id="SSF57184">
    <property type="entry name" value="Growth factor receptor domain"/>
    <property type="match status" value="8"/>
</dbReference>
<dbReference type="SUPFAM" id="SSF54897">
    <property type="entry name" value="Protease propeptides/inhibitors"/>
    <property type="match status" value="1"/>
</dbReference>
<dbReference type="SUPFAM" id="SSF52743">
    <property type="entry name" value="Subtilisin-like"/>
    <property type="match status" value="1"/>
</dbReference>
<dbReference type="PROSITE" id="PS51829">
    <property type="entry name" value="P_HOMO_B"/>
    <property type="match status" value="1"/>
</dbReference>
<dbReference type="PROSITE" id="PS51892">
    <property type="entry name" value="SUBTILASE"/>
    <property type="match status" value="1"/>
</dbReference>
<dbReference type="PROSITE" id="PS00137">
    <property type="entry name" value="SUBTILASE_HIS"/>
    <property type="match status" value="1"/>
</dbReference>
<dbReference type="PROSITE" id="PS00138">
    <property type="entry name" value="SUBTILASE_SER"/>
    <property type="match status" value="1"/>
</dbReference>
<keyword id="KW-0025">Alternative splicing</keyword>
<keyword id="KW-1003">Cell membrane</keyword>
<keyword id="KW-0165">Cleavage on pair of basic residues</keyword>
<keyword id="KW-0325">Glycoprotein</keyword>
<keyword id="KW-0378">Hydrolase</keyword>
<keyword id="KW-0472">Membrane</keyword>
<keyword id="KW-0645">Protease</keyword>
<keyword id="KW-0677">Repeat</keyword>
<keyword id="KW-0964">Secreted</keyword>
<keyword id="KW-0720">Serine protease</keyword>
<keyword id="KW-0732">Signal</keyword>
<keyword id="KW-0812">Transmembrane</keyword>
<keyword id="KW-1133">Transmembrane helix</keyword>
<keyword id="KW-0865">Zymogen</keyword>
<evidence type="ECO:0000250" key="1"/>
<evidence type="ECO:0000255" key="2"/>
<evidence type="ECO:0000255" key="3">
    <source>
        <dbReference type="PROSITE-ProRule" id="PRU01173"/>
    </source>
</evidence>
<evidence type="ECO:0000255" key="4">
    <source>
        <dbReference type="PROSITE-ProRule" id="PRU01240"/>
    </source>
</evidence>
<evidence type="ECO:0000256" key="5">
    <source>
        <dbReference type="SAM" id="MobiDB-lite"/>
    </source>
</evidence>
<evidence type="ECO:0000303" key="6">
    <source>
    </source>
</evidence>
<evidence type="ECO:0000305" key="7"/>
<comment type="function">
    <text evidence="1">Serine endoprotease that processes various proproteins by cleavage at paired basic amino acids, recognizing the RXXX[KR]R consensus motif. Likely functions in the constitutive and regulated secretory pathways.</text>
</comment>
<comment type="subcellular location">
    <molecule>Isoform A</molecule>
    <subcellularLocation>
        <location>Secreted</location>
    </subcellularLocation>
</comment>
<comment type="subcellular location">
    <molecule>Isoform C</molecule>
    <subcellularLocation>
        <location>Secreted</location>
    </subcellularLocation>
</comment>
<comment type="subcellular location">
    <molecule>Isoform B</molecule>
    <subcellularLocation>
        <location>Cell membrane</location>
        <topology>Single-pass type I membrane protein</topology>
    </subcellularLocation>
</comment>
<comment type="alternative products">
    <event type="alternative splicing"/>
    <isoform>
        <id>Q9NJ15-1</id>
        <name>B</name>
        <sequence type="displayed"/>
    </isoform>
    <isoform>
        <id>Q9NJ15-2</id>
        <name>A</name>
        <sequence type="described" ref="VSP_005444 VSP_005445"/>
    </isoform>
    <isoform>
        <id>Q9NJ15-3</id>
        <name>C</name>
        <sequence type="described" ref="VSP_005442 VSP_005443"/>
    </isoform>
</comment>
<comment type="domain">
    <text>The propeptide domain acts as an intramolecular chaperone assisting the folding of the zymogen within the endoplasmic reticulum.</text>
</comment>
<comment type="similarity">
    <text evidence="7">Belongs to the peptidase S8 family.</text>
</comment>
<sequence>MPPAIVILALFTAALCAVNLRTVAADGPRIYRNEWALHVEGGTAAADRLASKHGFINKGQIGSLEDHYLFVHRRTWKRSLRSSSHRHALLQREPEVRWLQQQVVKRRVKRRVKRVYSMYPWEQRVQHSSPQVNNPAQQDNLWDPHFNDEKWDKMWYLHCDRPEFACQWSDMNVEAAWKKGYTGKGVVVSILDDGSETDHPDLAGNYDPDASSDINGGTLDPTPRYEYTNENRHGTRCAGEVAAMGNNSFCSVGVAYKASIGGVRMLDGDVTDSVEAASLGLNPQHIMIYSASWGPDDDGKTVDGPANLAQKTFQAGAENGRDKLGSIFVWASGNGGRTHDSCGCDGYTNSIYTISVSSASEQGKVPWYLEPCASTLATTYSSGAPHERKVITTDLRKGCTESHTGTSASAPMAAGILALALEANPMLTWRDMQYIVVMAANPSPLDRDTESAYPRDPRKESDFVTNGAGLRVSHNFGFGLMDAGKMVELAESWRRVPEQHVCEEDPNAQQRAITKGETIVDTKTTGGCNGTDHHVKYLEHVVVEISLDHPCRGHLSIHITSPSGTRSTLLPERQFDSSSDGLKDWAFMTTHCWGEQPEGDWILEVKDLGQQNCQRYGLRTVLPVLRKWKLILYGTAEHPLYKRDEESRPHTPQTREEPTDEEECEDGDYYDRSKQRCRHCHDSCATCHGRHSGQCLSCHEGNYFVEDEGTCSEECGQGYYKDEEERKCLDCSADCLTCQVSADHCTSCDDEDGLKLFENTCVAQCSEGRYMDENDVCQDCDDSCDTCTGPDATDCVTCADEDLLQESQCVESCSSGYFQQEYECLKCHATCASCSGSRDDQCLTCSGHLELDEDTHRCITSCEDGEYGTEEGKCEDCNIICKKCNGSQADQCLECHHDTNLYDTTCVQYCGNRRYPENGECHPCHPSCLGCIGGEINQCNQCITDYEGEDHFLYQGTCHVTCPPGLYGDTTDQVCKACAPGCIACDGPADNQCTLCEEERAPTDGRCQSEGSQTDEAECAEGCHSCEEGPDICDSCDEDYYLTEDTCVRRTNCPSFTYPDDQDRECRPCHDNCEACDGPNNQNCNSCKEGFYKTPDGCSTGCPNRYYKDDTNKECKPCDSSCFTCSGPASFHCLSCADGDFLHESSCRSTCPAGFIGNAESHECVESSCEQDQYYSSETGRCEDCPYNCRACDNDGDCAECAPTYIVVDGRCRPEETCEDGEYQDRDRDTAELSCRPCHQSCKTCSGPSDTDCDSCKGDDTILDRGECITSCGPGEYMDRREKKCKACHPTCKECSDEYDDTCTACNDGFLLTDASSCEAGCPPGQFLHHGDCDSCHRECKTCDGPHHDNCLSCQPGSYLNDQQCSTHCPEGTFEETYEDDSGETVLQCRLCHVNCKTCHGEGEEDCMECANDIKYKQDGRCVTECQEGHYPDLTNECQQCWSDCETCDGPRNDQCVTCPYNYYLVLGKCLEDCPEGYYDTMRQEKECGECHPSCATCNEGGNYNCLSCPYGSKLGEGVCYPMCEEHEYYVEKTQICEECDNSCKTCRGSTAHDCLSCEAPYGYHAMKHLCTACCEEGSPENEYCCICHESTRLCITDREAEGVQFSSADSIPTNVAYIAVATFICVVIVVLFFVVFGMLQARSNGRLCWAHKYQQVPTTRYEKMNDHVNILSQEDFYNEDSLSEDEIHSIDSTRH</sequence>
<feature type="signal peptide" evidence="2">
    <location>
        <begin position="1"/>
        <end position="25"/>
    </location>
</feature>
<feature type="propeptide" id="PRO_0000027108" evidence="2">
    <location>
        <begin position="26"/>
        <end position="110"/>
    </location>
</feature>
<feature type="chain" id="PRO_0000027109" description="Proprotein convertase subtilisin/kexin type 5">
    <location>
        <begin position="111"/>
        <end position="1696"/>
    </location>
</feature>
<feature type="topological domain" description="Extracellular" evidence="2">
    <location>
        <begin position="111"/>
        <end position="1618"/>
    </location>
</feature>
<feature type="transmembrane region" description="Helical" evidence="2">
    <location>
        <begin position="1619"/>
        <end position="1639"/>
    </location>
</feature>
<feature type="topological domain" description="Cytoplasmic" evidence="2">
    <location>
        <begin position="1640"/>
        <end position="1696"/>
    </location>
</feature>
<feature type="domain" description="Peptidase S8" evidence="4">
    <location>
        <begin position="167"/>
        <end position="487"/>
    </location>
</feature>
<feature type="domain" description="P/Homo B" evidence="3">
    <location>
        <begin position="495"/>
        <end position="638"/>
    </location>
</feature>
<feature type="region of interest" description="Catalytic">
    <location>
        <begin position="111"/>
        <end position="488"/>
    </location>
</feature>
<feature type="region of interest" description="Disordered" evidence="5">
    <location>
        <begin position="643"/>
        <end position="666"/>
    </location>
</feature>
<feature type="region of interest" description="CRM (Cys-rich motif)">
    <location>
        <begin position="664"/>
        <end position="1649"/>
    </location>
</feature>
<feature type="compositionally biased region" description="Basic and acidic residues" evidence="5">
    <location>
        <begin position="643"/>
        <end position="657"/>
    </location>
</feature>
<feature type="active site" description="Charge relay system" evidence="4">
    <location>
        <position position="192"/>
    </location>
</feature>
<feature type="active site" description="Charge relay system" evidence="4">
    <location>
        <position position="233"/>
    </location>
</feature>
<feature type="active site" description="Charge relay system" evidence="4">
    <location>
        <position position="407"/>
    </location>
</feature>
<feature type="site" description="Cleavage; by autolysis" evidence="1">
    <location>
        <begin position="110"/>
        <end position="111"/>
    </location>
</feature>
<feature type="glycosylation site" description="N-linked (GlcNAc...) asparagine" evidence="2">
    <location>
        <position position="246"/>
    </location>
</feature>
<feature type="glycosylation site" description="N-linked (GlcNAc...) asparagine" evidence="2">
    <location>
        <position position="529"/>
    </location>
</feature>
<feature type="glycosylation site" description="N-linked (GlcNAc...) asparagine" evidence="2">
    <location>
        <position position="885"/>
    </location>
</feature>
<feature type="splice variant" id="VSP_005442" description="In isoform C." evidence="6">
    <original>DDTILDRGECITSCGPGEYMDRREKKCKACHPTCKECSDEYDDTCTACNDGFLLTDASSCEAGCP</original>
    <variation>AENQNQASFCPFAPREVSVLAELALGHLRYSLTDVPPQSNSPPDTVLGADRARLTTATSAAGRCA</variation>
    <location>
        <begin position="1259"/>
        <end position="1323"/>
    </location>
</feature>
<feature type="splice variant" id="VSP_005444" description="In isoform A." evidence="6">
    <original>CHPTCKECSDEYDDTCTACNDGFLLTDASSCEAGCPPGQFLHHGDCDSCHRECKTC</original>
    <variation>IARCVDRRDRSWCDLVLRFNFCVRRYFVKRCCGTCKLYMEDRPMRRGSSQPTQGRN</variation>
    <location>
        <begin position="1288"/>
        <end position="1343"/>
    </location>
</feature>
<feature type="splice variant" id="VSP_005443" description="In isoform C." evidence="6">
    <location>
        <begin position="1324"/>
        <end position="1696"/>
    </location>
</feature>
<feature type="splice variant" id="VSP_005445" description="In isoform A." evidence="6">
    <location>
        <begin position="1344"/>
        <end position="1696"/>
    </location>
</feature>
<gene>
    <name type="primary">PC6</name>
</gene>